<name>ACBD5_XENTR</name>
<feature type="chain" id="PRO_0000287384" description="Acyl-CoA-binding domain-containing protein 5">
    <location>
        <begin position="1"/>
        <end position="458"/>
    </location>
</feature>
<feature type="transmembrane region" description="Helical" evidence="2">
    <location>
        <begin position="430"/>
        <end position="450"/>
    </location>
</feature>
<feature type="domain" description="ACB" evidence="3">
    <location>
        <begin position="8"/>
        <end position="97"/>
    </location>
</feature>
<feature type="region of interest" description="Disordered" evidence="4">
    <location>
        <begin position="119"/>
        <end position="248"/>
    </location>
</feature>
<feature type="region of interest" description="Disordered" evidence="4">
    <location>
        <begin position="296"/>
        <end position="369"/>
    </location>
</feature>
<feature type="coiled-coil region" evidence="2">
    <location>
        <begin position="154"/>
        <end position="188"/>
    </location>
</feature>
<feature type="coiled-coil region" evidence="2">
    <location>
        <begin position="373"/>
        <end position="402"/>
    </location>
</feature>
<feature type="compositionally biased region" description="Polar residues" evidence="4">
    <location>
        <begin position="125"/>
        <end position="139"/>
    </location>
</feature>
<feature type="compositionally biased region" description="Basic and acidic residues" evidence="4">
    <location>
        <begin position="177"/>
        <end position="195"/>
    </location>
</feature>
<feature type="compositionally biased region" description="Basic and acidic residues" evidence="4">
    <location>
        <begin position="303"/>
        <end position="313"/>
    </location>
</feature>
<feature type="compositionally biased region" description="Basic and acidic residues" evidence="4">
    <location>
        <begin position="322"/>
        <end position="338"/>
    </location>
</feature>
<feature type="compositionally biased region" description="Gly residues" evidence="4">
    <location>
        <begin position="343"/>
        <end position="356"/>
    </location>
</feature>
<feature type="binding site" evidence="1">
    <location>
        <begin position="19"/>
        <end position="28"/>
    </location>
    <ligand>
        <name>an acyl-CoA</name>
        <dbReference type="ChEBI" id="CHEBI:58342"/>
    </ligand>
</feature>
<feature type="binding site" evidence="1">
    <location>
        <begin position="39"/>
        <end position="43"/>
    </location>
    <ligand>
        <name>an acyl-CoA</name>
        <dbReference type="ChEBI" id="CHEBI:58342"/>
    </ligand>
</feature>
<feature type="binding site" evidence="1">
    <location>
        <position position="65"/>
    </location>
    <ligand>
        <name>an acyl-CoA</name>
        <dbReference type="ChEBI" id="CHEBI:58342"/>
    </ligand>
</feature>
<feature type="binding site" evidence="1">
    <location>
        <position position="84"/>
    </location>
    <ligand>
        <name>an acyl-CoA</name>
        <dbReference type="ChEBI" id="CHEBI:58342"/>
    </ligand>
</feature>
<proteinExistence type="evidence at transcript level"/>
<keyword id="KW-0072">Autophagy</keyword>
<keyword id="KW-0175">Coiled coil</keyword>
<keyword id="KW-0446">Lipid-binding</keyword>
<keyword id="KW-0472">Membrane</keyword>
<keyword id="KW-0576">Peroxisome</keyword>
<keyword id="KW-1185">Reference proteome</keyword>
<keyword id="KW-0812">Transmembrane</keyword>
<keyword id="KW-1133">Transmembrane helix</keyword>
<keyword id="KW-0813">Transport</keyword>
<accession>Q640U0</accession>
<reference key="1">
    <citation type="submission" date="2004-09" db="EMBL/GenBank/DDBJ databases">
        <authorList>
            <consortium name="NIH - Xenopus Gene Collection (XGC) project"/>
        </authorList>
    </citation>
    <scope>NUCLEOTIDE SEQUENCE [LARGE SCALE MRNA]</scope>
</reference>
<comment type="function">
    <text evidence="1">Acyl-CoA binding protein which acts as the peroxisome receptor for pexophagy but is dispensable for aggrephagy and nonselective autophagy. Binds medium- and long-chain acyl-CoA esters (By similarity).</text>
</comment>
<comment type="subcellular location">
    <subcellularLocation>
        <location evidence="1">Peroxisome membrane</location>
        <topology evidence="1">Single-pass membrane protein</topology>
    </subcellularLocation>
</comment>
<comment type="similarity">
    <text evidence="5">Belongs to the ATG37 family.</text>
</comment>
<gene>
    <name type="primary">acbd5</name>
</gene>
<evidence type="ECO:0000250" key="1"/>
<evidence type="ECO:0000255" key="2"/>
<evidence type="ECO:0000255" key="3">
    <source>
        <dbReference type="PROSITE-ProRule" id="PRU00573"/>
    </source>
</evidence>
<evidence type="ECO:0000256" key="4">
    <source>
        <dbReference type="SAM" id="MobiDB-lite"/>
    </source>
</evidence>
<evidence type="ECO:0000305" key="5"/>
<dbReference type="EMBL" id="BC082499">
    <property type="protein sequence ID" value="AAH82499.1"/>
    <property type="molecule type" value="mRNA"/>
</dbReference>
<dbReference type="RefSeq" id="NP_001008180.1">
    <property type="nucleotide sequence ID" value="NM_001008179.1"/>
</dbReference>
<dbReference type="RefSeq" id="XP_012820028.1">
    <property type="nucleotide sequence ID" value="XM_012964574.3"/>
</dbReference>
<dbReference type="SMR" id="Q640U0"/>
<dbReference type="FunCoup" id="Q640U0">
    <property type="interactions" value="2225"/>
</dbReference>
<dbReference type="STRING" id="8364.ENSXETP00000047551"/>
<dbReference type="PaxDb" id="8364-ENSXETP00000059006"/>
<dbReference type="DNASU" id="493542"/>
<dbReference type="GeneID" id="493542"/>
<dbReference type="KEGG" id="xtr:493542"/>
<dbReference type="AGR" id="Xenbase:XB-GENE-982910"/>
<dbReference type="CTD" id="91452"/>
<dbReference type="Xenbase" id="XB-GENE-982910">
    <property type="gene designation" value="acbd5"/>
</dbReference>
<dbReference type="eggNOG" id="KOG0817">
    <property type="taxonomic scope" value="Eukaryota"/>
</dbReference>
<dbReference type="InParanoid" id="Q640U0"/>
<dbReference type="OrthoDB" id="71307at2759"/>
<dbReference type="Reactome" id="R-XTR-390918">
    <property type="pathway name" value="Peroxisomal lipid metabolism"/>
</dbReference>
<dbReference type="Reactome" id="R-XTR-8980692">
    <property type="pathway name" value="RHOA GTPase cycle"/>
</dbReference>
<dbReference type="Reactome" id="R-XTR-9603798">
    <property type="pathway name" value="Class I peroxisomal membrane protein import"/>
</dbReference>
<dbReference type="Proteomes" id="UP000008143">
    <property type="component" value="Chromosome 6"/>
</dbReference>
<dbReference type="Bgee" id="ENSXETG00000018777">
    <property type="expression patterns" value="Expressed in liver and 12 other cell types or tissues"/>
</dbReference>
<dbReference type="ExpressionAtlas" id="Q640U0">
    <property type="expression patterns" value="differential"/>
</dbReference>
<dbReference type="GO" id="GO:0005778">
    <property type="term" value="C:peroxisomal membrane"/>
    <property type="evidence" value="ECO:0007669"/>
    <property type="project" value="UniProtKB-SubCell"/>
</dbReference>
<dbReference type="GO" id="GO:0000062">
    <property type="term" value="F:fatty-acyl-CoA binding"/>
    <property type="evidence" value="ECO:0007669"/>
    <property type="project" value="InterPro"/>
</dbReference>
<dbReference type="GO" id="GO:0000425">
    <property type="term" value="P:pexophagy"/>
    <property type="evidence" value="ECO:0007669"/>
    <property type="project" value="InterPro"/>
</dbReference>
<dbReference type="CDD" id="cd00435">
    <property type="entry name" value="ACBP"/>
    <property type="match status" value="1"/>
</dbReference>
<dbReference type="FunFam" id="1.20.80.10:FF:000010">
    <property type="entry name" value="Acyl-CoA-binding domain-containing protein 5"/>
    <property type="match status" value="1"/>
</dbReference>
<dbReference type="Gene3D" id="1.20.80.10">
    <property type="match status" value="1"/>
</dbReference>
<dbReference type="InterPro" id="IPR016347">
    <property type="entry name" value="ACBD5"/>
</dbReference>
<dbReference type="InterPro" id="IPR022408">
    <property type="entry name" value="Acyl-CoA-binding_prot_CS"/>
</dbReference>
<dbReference type="InterPro" id="IPR000582">
    <property type="entry name" value="Acyl-CoA-binding_protein"/>
</dbReference>
<dbReference type="InterPro" id="IPR035984">
    <property type="entry name" value="Acyl-CoA-binding_sf"/>
</dbReference>
<dbReference type="InterPro" id="IPR014352">
    <property type="entry name" value="FERM/acyl-CoA-bd_prot_sf"/>
</dbReference>
<dbReference type="PANTHER" id="PTHR23310:SF6">
    <property type="entry name" value="ACYL-COA-BINDING DOMAIN-CONTAINING PROTEIN 5"/>
    <property type="match status" value="1"/>
</dbReference>
<dbReference type="PANTHER" id="PTHR23310">
    <property type="entry name" value="ACYL-COA-BINDING PROTEIN, ACBP"/>
    <property type="match status" value="1"/>
</dbReference>
<dbReference type="Pfam" id="PF00887">
    <property type="entry name" value="ACBP"/>
    <property type="match status" value="1"/>
</dbReference>
<dbReference type="PIRSF" id="PIRSF002412">
    <property type="entry name" value="MA_DBI"/>
    <property type="match status" value="1"/>
</dbReference>
<dbReference type="PRINTS" id="PR00689">
    <property type="entry name" value="ACOABINDINGP"/>
</dbReference>
<dbReference type="SUPFAM" id="SSF47027">
    <property type="entry name" value="Acyl-CoA binding protein"/>
    <property type="match status" value="1"/>
</dbReference>
<dbReference type="PROSITE" id="PS00880">
    <property type="entry name" value="ACB_1"/>
    <property type="match status" value="1"/>
</dbReference>
<dbReference type="PROSITE" id="PS51228">
    <property type="entry name" value="ACB_2"/>
    <property type="match status" value="1"/>
</dbReference>
<organism>
    <name type="scientific">Xenopus tropicalis</name>
    <name type="common">Western clawed frog</name>
    <name type="synonym">Silurana tropicalis</name>
    <dbReference type="NCBI Taxonomy" id="8364"/>
    <lineage>
        <taxon>Eukaryota</taxon>
        <taxon>Metazoa</taxon>
        <taxon>Chordata</taxon>
        <taxon>Craniata</taxon>
        <taxon>Vertebrata</taxon>
        <taxon>Euteleostomi</taxon>
        <taxon>Amphibia</taxon>
        <taxon>Batrachia</taxon>
        <taxon>Anura</taxon>
        <taxon>Pipoidea</taxon>
        <taxon>Pipidae</taxon>
        <taxon>Xenopodinae</taxon>
        <taxon>Xenopus</taxon>
        <taxon>Silurana</taxon>
    </lineage>
</organism>
<sequence length="458" mass="50881">MADTKPLHQTRFEAAVSVIQSLPKNGSFQPSNEMMLKFYSFYKQATLGPCNTPRPGFWDPVGRYKWDAWNSLGDMSKEDAMIAYVDEMKKILETMPVTEKVEELLQVIGPFYEIVEDKKHGRGSGVTSELGSVLTSTPNGKAVNGKAESSDSGAESDEEQAATKEVREEDEEEESEHSEQEDKDVEQQPGHEKPAESIVNGLTRNHRELVTEEPTPLPSKCLSEPGDKVAIPDTHSPVNDPEADREEDCTEDIAAMQHLTSDSDSEIFCDSMEQFGQDEADHSLLLQDAMLNGDITETSAGGELKDGGEDGKQSGHGAQRKTWSEKSEHFGSRRERPSRMQPGGDGSRSGQIGSGGDGDRWGSDRGPNGSLNEQIAVVLMRLQEDMQNVLQRLHSLEVQTASQAQFLLRESNNQPMEKKPSRWPFGISPGTLALAVVWPFVVHWLMHVFLQKRRRKQT</sequence>
<protein>
    <recommendedName>
        <fullName>Acyl-CoA-binding domain-containing protein 5</fullName>
    </recommendedName>
</protein>